<keyword id="KW-0106">Calcium</keyword>
<keyword id="KW-0966">Cell projection</keyword>
<keyword id="KW-0449">Lipoprotein</keyword>
<keyword id="KW-0472">Membrane</keyword>
<keyword id="KW-0479">Metal-binding</keyword>
<keyword id="KW-0519">Myristate</keyword>
<keyword id="KW-1185">Reference proteome</keyword>
<keyword id="KW-0677">Repeat</keyword>
<keyword id="KW-0716">Sensory transduction</keyword>
<keyword id="KW-0844">Vision</keyword>
<dbReference type="EMBL" id="L36860">
    <property type="protein sequence ID" value="AAA60716.1"/>
    <property type="molecule type" value="mRNA"/>
</dbReference>
<dbReference type="EMBL" id="AC112683">
    <property type="status" value="NOT_ANNOTATED_CDS"/>
    <property type="molecule type" value="Genomic_DNA"/>
</dbReference>
<dbReference type="EMBL" id="CH466559">
    <property type="protein sequence ID" value="EDL23558.1"/>
    <property type="molecule type" value="Genomic_DNA"/>
</dbReference>
<dbReference type="EMBL" id="CH466559">
    <property type="protein sequence ID" value="EDL23559.1"/>
    <property type="molecule type" value="Genomic_DNA"/>
</dbReference>
<dbReference type="EMBL" id="CH466559">
    <property type="protein sequence ID" value="EDL23560.1"/>
    <property type="molecule type" value="Genomic_DNA"/>
</dbReference>
<dbReference type="EMBL" id="BC026834">
    <property type="protein sequence ID" value="AAH26834.1"/>
    <property type="molecule type" value="mRNA"/>
</dbReference>
<dbReference type="EMBL" id="BC031810">
    <property type="protein sequence ID" value="AAH31810.1"/>
    <property type="molecule type" value="mRNA"/>
</dbReference>
<dbReference type="CCDS" id="CCDS28848.1"/>
<dbReference type="PIR" id="B55331">
    <property type="entry name" value="B55331"/>
</dbReference>
<dbReference type="RefSeq" id="NP_032215.2">
    <property type="nucleotide sequence ID" value="NM_008189.3"/>
</dbReference>
<dbReference type="RefSeq" id="XP_011244598.1">
    <property type="nucleotide sequence ID" value="XM_011246296.3"/>
</dbReference>
<dbReference type="SMR" id="P43081"/>
<dbReference type="FunCoup" id="P43081">
    <property type="interactions" value="29"/>
</dbReference>
<dbReference type="STRING" id="10090.ENSMUSP00000060027"/>
<dbReference type="PaxDb" id="10090-ENSMUSP00000060027"/>
<dbReference type="ProteomicsDB" id="271490"/>
<dbReference type="Antibodypedia" id="30136">
    <property type="antibodies" value="187 antibodies from 28 providers"/>
</dbReference>
<dbReference type="DNASU" id="14913"/>
<dbReference type="Ensembl" id="ENSMUST00000059348.9">
    <property type="protein sequence ID" value="ENSMUSP00000060027.8"/>
    <property type="gene ID" value="ENSMUSG00000023982.9"/>
</dbReference>
<dbReference type="GeneID" id="14913"/>
<dbReference type="KEGG" id="mmu:14913"/>
<dbReference type="UCSC" id="uc008cvc.1">
    <property type="organism name" value="mouse"/>
</dbReference>
<dbReference type="AGR" id="MGI:102770"/>
<dbReference type="CTD" id="2978"/>
<dbReference type="MGI" id="MGI:102770">
    <property type="gene designation" value="Guca1a"/>
</dbReference>
<dbReference type="VEuPathDB" id="HostDB:ENSMUSG00000023982"/>
<dbReference type="eggNOG" id="KOG0044">
    <property type="taxonomic scope" value="Eukaryota"/>
</dbReference>
<dbReference type="GeneTree" id="ENSGT00940000160607"/>
<dbReference type="HOGENOM" id="CLU_072366_4_1_1"/>
<dbReference type="InParanoid" id="P43081"/>
<dbReference type="OMA" id="IRTINPC"/>
<dbReference type="OrthoDB" id="55657at9989"/>
<dbReference type="PhylomeDB" id="P43081"/>
<dbReference type="TreeFam" id="TF333971"/>
<dbReference type="Reactome" id="R-MMU-2514859">
    <property type="pathway name" value="Inactivation, recovery and regulation of the phototransduction cascade"/>
</dbReference>
<dbReference type="BioGRID-ORCS" id="14913">
    <property type="hits" value="2 hits in 81 CRISPR screens"/>
</dbReference>
<dbReference type="ChiTaRS" id="Guca1a">
    <property type="organism name" value="mouse"/>
</dbReference>
<dbReference type="PRO" id="PR:P43081"/>
<dbReference type="Proteomes" id="UP000000589">
    <property type="component" value="Chromosome 17"/>
</dbReference>
<dbReference type="RNAct" id="P43081">
    <property type="molecule type" value="protein"/>
</dbReference>
<dbReference type="Bgee" id="ENSMUSG00000023982">
    <property type="expression patterns" value="Expressed in layer of retina and 67 other cell types or tissues"/>
</dbReference>
<dbReference type="GO" id="GO:0120199">
    <property type="term" value="C:cone photoreceptor outer segment"/>
    <property type="evidence" value="ECO:0000314"/>
    <property type="project" value="UniProtKB"/>
</dbReference>
<dbReference type="GO" id="GO:0016020">
    <property type="term" value="C:membrane"/>
    <property type="evidence" value="ECO:0007669"/>
    <property type="project" value="UniProtKB-SubCell"/>
</dbReference>
<dbReference type="GO" id="GO:0001917">
    <property type="term" value="C:photoreceptor inner segment"/>
    <property type="evidence" value="ECO:0000314"/>
    <property type="project" value="UniProtKB"/>
</dbReference>
<dbReference type="GO" id="GO:0001750">
    <property type="term" value="C:photoreceptor outer segment"/>
    <property type="evidence" value="ECO:0000314"/>
    <property type="project" value="MGI"/>
</dbReference>
<dbReference type="GO" id="GO:0005509">
    <property type="term" value="F:calcium ion binding"/>
    <property type="evidence" value="ECO:0000250"/>
    <property type="project" value="UniProtKB"/>
</dbReference>
<dbReference type="GO" id="GO:0008048">
    <property type="term" value="F:calcium sensitive guanylate cyclase activator activity"/>
    <property type="evidence" value="ECO:0000314"/>
    <property type="project" value="MGI"/>
</dbReference>
<dbReference type="GO" id="GO:0030249">
    <property type="term" value="F:guanylate cyclase regulator activity"/>
    <property type="evidence" value="ECO:0000316"/>
    <property type="project" value="MGI"/>
</dbReference>
<dbReference type="GO" id="GO:0071277">
    <property type="term" value="P:cellular response to calcium ion"/>
    <property type="evidence" value="ECO:0000250"/>
    <property type="project" value="UniProtKB"/>
</dbReference>
<dbReference type="GO" id="GO:0007602">
    <property type="term" value="P:phototransduction"/>
    <property type="evidence" value="ECO:0000315"/>
    <property type="project" value="MGI"/>
</dbReference>
<dbReference type="GO" id="GO:0010753">
    <property type="term" value="P:positive regulation of cGMP-mediated signaling"/>
    <property type="evidence" value="ECO:0007669"/>
    <property type="project" value="Ensembl"/>
</dbReference>
<dbReference type="GO" id="GO:0007601">
    <property type="term" value="P:visual perception"/>
    <property type="evidence" value="ECO:0000315"/>
    <property type="project" value="MGI"/>
</dbReference>
<dbReference type="CDD" id="cd00051">
    <property type="entry name" value="EFh"/>
    <property type="match status" value="2"/>
</dbReference>
<dbReference type="FunFam" id="1.10.238.10:FF:000052">
    <property type="entry name" value="Guanylate cyclase activator 1A"/>
    <property type="match status" value="1"/>
</dbReference>
<dbReference type="Gene3D" id="1.10.238.10">
    <property type="entry name" value="EF-hand"/>
    <property type="match status" value="2"/>
</dbReference>
<dbReference type="InterPro" id="IPR011992">
    <property type="entry name" value="EF-hand-dom_pair"/>
</dbReference>
<dbReference type="InterPro" id="IPR018247">
    <property type="entry name" value="EF_Hand_1_Ca_BS"/>
</dbReference>
<dbReference type="InterPro" id="IPR002048">
    <property type="entry name" value="EF_hand_dom"/>
</dbReference>
<dbReference type="InterPro" id="IPR028846">
    <property type="entry name" value="Recoverin"/>
</dbReference>
<dbReference type="PANTHER" id="PTHR23055">
    <property type="entry name" value="CALCIUM BINDING PROTEINS"/>
    <property type="match status" value="1"/>
</dbReference>
<dbReference type="PANTHER" id="PTHR23055:SF13">
    <property type="entry name" value="GUANYLYL CYCLASE-ACTIVATING PROTEIN 1"/>
    <property type="match status" value="1"/>
</dbReference>
<dbReference type="Pfam" id="PF00036">
    <property type="entry name" value="EF-hand_1"/>
    <property type="match status" value="1"/>
</dbReference>
<dbReference type="Pfam" id="PF13499">
    <property type="entry name" value="EF-hand_7"/>
    <property type="match status" value="1"/>
</dbReference>
<dbReference type="PRINTS" id="PR00450">
    <property type="entry name" value="RECOVERIN"/>
</dbReference>
<dbReference type="SMART" id="SM00054">
    <property type="entry name" value="EFh"/>
    <property type="match status" value="3"/>
</dbReference>
<dbReference type="SUPFAM" id="SSF47473">
    <property type="entry name" value="EF-hand"/>
    <property type="match status" value="1"/>
</dbReference>
<dbReference type="PROSITE" id="PS00018">
    <property type="entry name" value="EF_HAND_1"/>
    <property type="match status" value="3"/>
</dbReference>
<dbReference type="PROSITE" id="PS50222">
    <property type="entry name" value="EF_HAND_2"/>
    <property type="match status" value="4"/>
</dbReference>
<protein>
    <recommendedName>
        <fullName>Guanylyl cyclase-activating protein 1</fullName>
        <shortName>GCAP 1</shortName>
    </recommendedName>
    <alternativeName>
        <fullName>Guanylate cyclase activator 1A</fullName>
    </alternativeName>
</protein>
<feature type="initiator methionine" description="Removed" evidence="3">
    <location>
        <position position="1"/>
    </location>
</feature>
<feature type="chain" id="PRO_0000073804" description="Guanylyl cyclase-activating protein 1">
    <location>
        <begin position="2"/>
        <end position="202"/>
    </location>
</feature>
<feature type="domain" description="EF-hand 1" evidence="4">
    <location>
        <begin position="31"/>
        <end position="49"/>
    </location>
</feature>
<feature type="domain" description="EF-hand 2" evidence="4">
    <location>
        <begin position="51"/>
        <end position="86"/>
    </location>
</feature>
<feature type="domain" description="EF-hand 3" evidence="4">
    <location>
        <begin position="87"/>
        <end position="122"/>
    </location>
</feature>
<feature type="domain" description="EF-hand 4" evidence="4">
    <location>
        <begin position="131"/>
        <end position="166"/>
    </location>
</feature>
<feature type="binding site" evidence="4">
    <location>
        <position position="64"/>
    </location>
    <ligand>
        <name>Ca(2+)</name>
        <dbReference type="ChEBI" id="CHEBI:29108"/>
        <label>1</label>
    </ligand>
</feature>
<feature type="binding site" evidence="4">
    <location>
        <position position="66"/>
    </location>
    <ligand>
        <name>Ca(2+)</name>
        <dbReference type="ChEBI" id="CHEBI:29108"/>
        <label>1</label>
    </ligand>
</feature>
<feature type="binding site" evidence="4">
    <location>
        <position position="68"/>
    </location>
    <ligand>
        <name>Ca(2+)</name>
        <dbReference type="ChEBI" id="CHEBI:29108"/>
        <label>1</label>
    </ligand>
</feature>
<feature type="binding site" evidence="4">
    <location>
        <position position="70"/>
    </location>
    <ligand>
        <name>Ca(2+)</name>
        <dbReference type="ChEBI" id="CHEBI:29108"/>
        <label>1</label>
    </ligand>
</feature>
<feature type="binding site" evidence="4">
    <location>
        <position position="75"/>
    </location>
    <ligand>
        <name>Ca(2+)</name>
        <dbReference type="ChEBI" id="CHEBI:29108"/>
        <label>1</label>
    </ligand>
</feature>
<feature type="binding site" evidence="4">
    <location>
        <position position="100"/>
    </location>
    <ligand>
        <name>Ca(2+)</name>
        <dbReference type="ChEBI" id="CHEBI:29108"/>
        <label>2</label>
    </ligand>
</feature>
<feature type="binding site" evidence="4">
    <location>
        <position position="102"/>
    </location>
    <ligand>
        <name>Ca(2+)</name>
        <dbReference type="ChEBI" id="CHEBI:29108"/>
        <label>2</label>
    </ligand>
</feature>
<feature type="binding site" evidence="4">
    <location>
        <position position="104"/>
    </location>
    <ligand>
        <name>Ca(2+)</name>
        <dbReference type="ChEBI" id="CHEBI:29108"/>
        <label>2</label>
    </ligand>
</feature>
<feature type="binding site" evidence="4">
    <location>
        <position position="106"/>
    </location>
    <ligand>
        <name>Ca(2+)</name>
        <dbReference type="ChEBI" id="CHEBI:29108"/>
        <label>2</label>
    </ligand>
</feature>
<feature type="binding site" evidence="4">
    <location>
        <position position="111"/>
    </location>
    <ligand>
        <name>Ca(2+)</name>
        <dbReference type="ChEBI" id="CHEBI:29108"/>
        <label>2</label>
    </ligand>
</feature>
<feature type="binding site" evidence="4">
    <location>
        <position position="144"/>
    </location>
    <ligand>
        <name>Ca(2+)</name>
        <dbReference type="ChEBI" id="CHEBI:29108"/>
        <label>3</label>
    </ligand>
</feature>
<feature type="binding site" evidence="4">
    <location>
        <position position="146"/>
    </location>
    <ligand>
        <name>Ca(2+)</name>
        <dbReference type="ChEBI" id="CHEBI:29108"/>
        <label>3</label>
    </ligand>
</feature>
<feature type="binding site" evidence="4">
    <location>
        <position position="148"/>
    </location>
    <ligand>
        <name>Ca(2+)</name>
        <dbReference type="ChEBI" id="CHEBI:29108"/>
        <label>3</label>
    </ligand>
</feature>
<feature type="binding site" evidence="4">
    <location>
        <position position="150"/>
    </location>
    <ligand>
        <name>Ca(2+)</name>
        <dbReference type="ChEBI" id="CHEBI:29108"/>
        <label>3</label>
    </ligand>
</feature>
<feature type="binding site" evidence="4">
    <location>
        <position position="155"/>
    </location>
    <ligand>
        <name>Ca(2+)</name>
        <dbReference type="ChEBI" id="CHEBI:29108"/>
        <label>3</label>
    </ligand>
</feature>
<feature type="modified residue" description="Deamidated asparagine" evidence="3">
    <location>
        <position position="3"/>
    </location>
</feature>
<feature type="lipid moiety-binding region" description="N-myristoyl glycine" evidence="2">
    <location>
        <position position="2"/>
    </location>
</feature>
<feature type="sequence conflict" description="In Ref. 1; AAA60716." evidence="9" ref="1">
    <original>I</original>
    <variation>V</variation>
    <location>
        <position position="4"/>
    </location>
</feature>
<feature type="sequence conflict" description="In Ref. 1; AAA60716." evidence="9" ref="1">
    <original>C</original>
    <variation>V</variation>
    <location>
        <position position="29"/>
    </location>
</feature>
<feature type="sequence conflict" description="In Ref. 1; AAA60716." evidence="9" ref="1">
    <original>G</original>
    <variation>S</variation>
    <location>
        <position position="194"/>
    </location>
</feature>
<reference key="1">
    <citation type="journal article" date="1994" name="J. Biol. Chem.">
        <title>Molecular characterization of human and mouse photoreceptor guanylate cyclase-activating protein (GCAP) and chromosomal localization of the human gene.</title>
        <authorList>
            <person name="Subbaraya I."/>
            <person name="Ruiz C.C."/>
            <person name="Helekar B.S."/>
            <person name="Zhao X."/>
            <person name="Gorczyca W.A."/>
            <person name="Pettenati M.J."/>
            <person name="Rao P.N."/>
            <person name="Palczewski K."/>
            <person name="Baehr W."/>
        </authorList>
    </citation>
    <scope>NUCLEOTIDE SEQUENCE [MRNA]</scope>
    <source>
        <strain>BALB/cJ</strain>
        <tissue>Retina</tissue>
    </source>
</reference>
<reference key="2">
    <citation type="journal article" date="2009" name="PLoS Biol.">
        <title>Lineage-specific biology revealed by a finished genome assembly of the mouse.</title>
        <authorList>
            <person name="Church D.M."/>
            <person name="Goodstadt L."/>
            <person name="Hillier L.W."/>
            <person name="Zody M.C."/>
            <person name="Goldstein S."/>
            <person name="She X."/>
            <person name="Bult C.J."/>
            <person name="Agarwala R."/>
            <person name="Cherry J.L."/>
            <person name="DiCuccio M."/>
            <person name="Hlavina W."/>
            <person name="Kapustin Y."/>
            <person name="Meric P."/>
            <person name="Maglott D."/>
            <person name="Birtle Z."/>
            <person name="Marques A.C."/>
            <person name="Graves T."/>
            <person name="Zhou S."/>
            <person name="Teague B."/>
            <person name="Potamousis K."/>
            <person name="Churas C."/>
            <person name="Place M."/>
            <person name="Herschleb J."/>
            <person name="Runnheim R."/>
            <person name="Forrest D."/>
            <person name="Amos-Landgraf J."/>
            <person name="Schwartz D.C."/>
            <person name="Cheng Z."/>
            <person name="Lindblad-Toh K."/>
            <person name="Eichler E.E."/>
            <person name="Ponting C.P."/>
        </authorList>
    </citation>
    <scope>NUCLEOTIDE SEQUENCE [LARGE SCALE GENOMIC DNA]</scope>
    <source>
        <strain>C57BL/6J</strain>
    </source>
</reference>
<reference key="3">
    <citation type="submission" date="2005-07" db="EMBL/GenBank/DDBJ databases">
        <authorList>
            <person name="Mural R.J."/>
            <person name="Adams M.D."/>
            <person name="Myers E.W."/>
            <person name="Smith H.O."/>
            <person name="Venter J.C."/>
        </authorList>
    </citation>
    <scope>NUCLEOTIDE SEQUENCE [LARGE SCALE GENOMIC DNA]</scope>
</reference>
<reference key="4">
    <citation type="journal article" date="2004" name="Genome Res.">
        <title>The status, quality, and expansion of the NIH full-length cDNA project: the Mammalian Gene Collection (MGC).</title>
        <authorList>
            <consortium name="The MGC Project Team"/>
        </authorList>
    </citation>
    <scope>NUCLEOTIDE SEQUENCE [LARGE SCALE MRNA]</scope>
    <source>
        <tissue>Eye</tissue>
    </source>
</reference>
<reference key="5">
    <citation type="journal article" date="1998" name="Invest. Ophthalmol. Vis. Sci.">
        <title>The localization of guanylyl cyclase-activating proteins in the mammalian retina.</title>
        <authorList>
            <person name="Cuenca N."/>
            <person name="Lopez S."/>
            <person name="Howes K."/>
            <person name="Kolb H."/>
        </authorList>
    </citation>
    <scope>TISSUE SPECIFICITY</scope>
    <scope>SUBCELLULAR LOCATION</scope>
</reference>
<reference key="6">
    <citation type="journal article" date="2005" name="J. Biol. Chem.">
        <title>Recoverin undergoes light-dependent intracellular translocation in rod photoreceptors.</title>
        <authorList>
            <person name="Strissel K.J."/>
            <person name="Lishko P.V."/>
            <person name="Trieu L.H."/>
            <person name="Kennedy M.J."/>
            <person name="Hurley J.B."/>
            <person name="Arshavsky V.Y."/>
        </authorList>
    </citation>
    <scope>SUBCELLULAR LOCATION</scope>
    <scope>TISSUE SPECIFICITY</scope>
</reference>
<reference key="7">
    <citation type="journal article" date="2015" name="J. Biol. Chem.">
        <title>Regulation of mammalian cone phototransduction by recoverin and rhodopsin kinase.</title>
        <authorList>
            <person name="Sakurai K."/>
            <person name="Chen J."/>
            <person name="Khani S.C."/>
            <person name="Kefalov V.J."/>
        </authorList>
    </citation>
    <scope>FUNCTION</scope>
    <scope>DISRUPTION PHENOTYPE</scope>
</reference>
<reference key="8">
    <citation type="journal article" date="2018" name="J. Physiol. (Lond.)">
        <title>Role of recoverin in rod photoreceptor light adaptation.</title>
        <authorList>
            <person name="Morshedian A."/>
            <person name="Woodruff M.L."/>
            <person name="Fain G.L."/>
        </authorList>
    </citation>
    <scope>DISRUPTION PHENOTYPE</scope>
</reference>
<gene>
    <name type="primary">Guca1a</name>
    <name type="synonym">Gcap</name>
    <name type="synonym">Gcap1</name>
    <name type="synonym">Guca1</name>
</gene>
<evidence type="ECO:0000250" key="1">
    <source>
        <dbReference type="UniProtKB" id="P43080"/>
    </source>
</evidence>
<evidence type="ECO:0000250" key="2">
    <source>
        <dbReference type="UniProtKB" id="P46065"/>
    </source>
</evidence>
<evidence type="ECO:0000255" key="3"/>
<evidence type="ECO:0000255" key="4">
    <source>
        <dbReference type="PROSITE-ProRule" id="PRU00448"/>
    </source>
</evidence>
<evidence type="ECO:0000269" key="5">
    <source>
    </source>
</evidence>
<evidence type="ECO:0000269" key="6">
    <source>
    </source>
</evidence>
<evidence type="ECO:0000269" key="7">
    <source>
    </source>
</evidence>
<evidence type="ECO:0000269" key="8">
    <source>
    </source>
</evidence>
<evidence type="ECO:0000305" key="9"/>
<sequence length="202" mass="22986">MGNIMEGKSVEELSSTECHQWYKKFMTECPSGQLTLYEFRQFFGLKNLSPSASQYVEQMFETFDFNKDGYIDFMEYVAALSLVLKGKVEQKLRWYFKLYDVDGNGCIDRDELLTIIRAIRTINPWSDSSMSAEEFTDTVFAKIDINGDGELSLEEFMEGVQKDQMLLDTLTRSLDLTGIVRRLQNGEHEEAGTGDLAAEAAG</sequence>
<organism>
    <name type="scientific">Mus musculus</name>
    <name type="common">Mouse</name>
    <dbReference type="NCBI Taxonomy" id="10090"/>
    <lineage>
        <taxon>Eukaryota</taxon>
        <taxon>Metazoa</taxon>
        <taxon>Chordata</taxon>
        <taxon>Craniata</taxon>
        <taxon>Vertebrata</taxon>
        <taxon>Euteleostomi</taxon>
        <taxon>Mammalia</taxon>
        <taxon>Eutheria</taxon>
        <taxon>Euarchontoglires</taxon>
        <taxon>Glires</taxon>
        <taxon>Rodentia</taxon>
        <taxon>Myomorpha</taxon>
        <taxon>Muroidea</taxon>
        <taxon>Muridae</taxon>
        <taxon>Murinae</taxon>
        <taxon>Mus</taxon>
        <taxon>Mus</taxon>
    </lineage>
</organism>
<proteinExistence type="evidence at protein level"/>
<accession>P43081</accession>
<accession>Q8R0H3</accession>
<comment type="function">
    <text evidence="2 6">Stimulates retinal guanylyl cyclase when free calcium ions concentration is low and inhibits guanylyl cyclase when free calcium ions concentration is elevated (By similarity). This Ca(2+)-sensitive regulation of retinal guanylyl cyclase is a key event in recovery of the dark state of rod photoreceptors following light exposure (By similarity). May be involved in cone photoreceptor light response and recovery of response in bright light (PubMed:25673692).</text>
</comment>
<comment type="subunit">
    <text evidence="1">Homodimer.</text>
</comment>
<comment type="subcellular location">
    <subcellularLocation>
        <location>Membrane</location>
        <topology evidence="2">Lipid-anchor</topology>
    </subcellularLocation>
    <subcellularLocation>
        <location evidence="8">Photoreceptor inner segment</location>
    </subcellularLocation>
    <subcellularLocation>
        <location evidence="5 8">Cell projection</location>
        <location evidence="5 8">Cilium</location>
        <location evidence="5 8">Photoreceptor outer segment</location>
    </subcellularLocation>
    <text>Subcellular location is not affected by light or dark conditions.</text>
</comment>
<comment type="tissue specificity">
    <text evidence="5 8">In the retina, expressed in rod photoreceptors (at protein level) (PubMed:9620085). Expressed in cone photoreceptors (PubMed:9620085).</text>
</comment>
<comment type="domain">
    <text evidence="2">Binds three calcium ions (via EF-hands 2, 3 and 4) when calcium levels are high. Binds Mg(2+) when calcium levels are low.</text>
</comment>
<comment type="disruption phenotype">
    <text evidence="6 7">Guca1a and Guca1b double knockout mice show an increase in response to light in dark-adapted cone photoreceptors (PubMed:25673692). Dark-adapted cone photoreceptors show a delayed response time and a delayed recovery time in response to light (PubMed:25673692). Guca1a, Guca1b and Rcvrn triple knockout mice show rod photoreceptors have a reduced current decay during light response (PubMed:29435986).</text>
</comment>
<name>GUC1A_MOUSE</name>